<gene>
    <name evidence="1" type="primary">rnhA</name>
    <name type="ordered locus">Mfla_1479</name>
</gene>
<organism>
    <name type="scientific">Methylobacillus flagellatus (strain ATCC 51484 / DSM 6875 / VKM B-1610 / KT)</name>
    <dbReference type="NCBI Taxonomy" id="265072"/>
    <lineage>
        <taxon>Bacteria</taxon>
        <taxon>Pseudomonadati</taxon>
        <taxon>Pseudomonadota</taxon>
        <taxon>Betaproteobacteria</taxon>
        <taxon>Nitrosomonadales</taxon>
        <taxon>Methylophilaceae</taxon>
        <taxon>Methylobacillus</taxon>
    </lineage>
</organism>
<reference key="1">
    <citation type="submission" date="2006-03" db="EMBL/GenBank/DDBJ databases">
        <title>Complete sequence of Methylobacillus flagellatus KT.</title>
        <authorList>
            <consortium name="US DOE Joint Genome Institute"/>
            <person name="Copeland A."/>
            <person name="Lucas S."/>
            <person name="Lapidus A."/>
            <person name="Barry K."/>
            <person name="Detter J.C."/>
            <person name="Glavina del Rio T."/>
            <person name="Hammon N."/>
            <person name="Israni S."/>
            <person name="Dalin E."/>
            <person name="Tice H."/>
            <person name="Pitluck S."/>
            <person name="Brettin T."/>
            <person name="Bruce D."/>
            <person name="Han C."/>
            <person name="Tapia R."/>
            <person name="Saunders E."/>
            <person name="Gilna P."/>
            <person name="Schmutz J."/>
            <person name="Larimer F."/>
            <person name="Land M."/>
            <person name="Kyrpides N."/>
            <person name="Anderson I."/>
            <person name="Richardson P."/>
        </authorList>
    </citation>
    <scope>NUCLEOTIDE SEQUENCE [LARGE SCALE GENOMIC DNA]</scope>
    <source>
        <strain>ATCC 51484 / DSM 6875 / VKM B-1610 / KT</strain>
    </source>
</reference>
<keyword id="KW-0963">Cytoplasm</keyword>
<keyword id="KW-0255">Endonuclease</keyword>
<keyword id="KW-0378">Hydrolase</keyword>
<keyword id="KW-0460">Magnesium</keyword>
<keyword id="KW-0479">Metal-binding</keyword>
<keyword id="KW-0540">Nuclease</keyword>
<keyword id="KW-1185">Reference proteome</keyword>
<comment type="function">
    <text evidence="1">Endonuclease that specifically degrades the RNA of RNA-DNA hybrids.</text>
</comment>
<comment type="catalytic activity">
    <reaction evidence="1">
        <text>Endonucleolytic cleavage to 5'-phosphomonoester.</text>
        <dbReference type="EC" id="3.1.26.4"/>
    </reaction>
</comment>
<comment type="cofactor">
    <cofactor evidence="1">
        <name>Mg(2+)</name>
        <dbReference type="ChEBI" id="CHEBI:18420"/>
    </cofactor>
    <text evidence="1">Binds 1 Mg(2+) ion per subunit. May bind a second metal ion at a regulatory site, or after substrate binding.</text>
</comment>
<comment type="subunit">
    <text evidence="1">Monomer.</text>
</comment>
<comment type="subcellular location">
    <subcellularLocation>
        <location evidence="1">Cytoplasm</location>
    </subcellularLocation>
</comment>
<comment type="similarity">
    <text evidence="1">Belongs to the RNase H family.</text>
</comment>
<accession>Q1H190</accession>
<sequence>MSSNVIEIYADGACKGNPGPGGWGAWLSFAGHEKELWGGELVTTNNRMELTAVIRALEALKRQCSVRIYTDSVYVQKGITEWVHSWKARNWLTSDRKPVKNVDLWKALDSLVQQHQVEWVWVKGHAGNVGNERADALANKGVDQVLGREVV</sequence>
<evidence type="ECO:0000255" key="1">
    <source>
        <dbReference type="HAMAP-Rule" id="MF_00042"/>
    </source>
</evidence>
<evidence type="ECO:0000255" key="2">
    <source>
        <dbReference type="PROSITE-ProRule" id="PRU00408"/>
    </source>
</evidence>
<proteinExistence type="inferred from homology"/>
<protein>
    <recommendedName>
        <fullName evidence="1">Ribonuclease H</fullName>
        <shortName evidence="1">RNase H</shortName>
        <ecNumber evidence="1">3.1.26.4</ecNumber>
    </recommendedName>
</protein>
<feature type="chain" id="PRO_0000332627" description="Ribonuclease H">
    <location>
        <begin position="1"/>
        <end position="151"/>
    </location>
</feature>
<feature type="domain" description="RNase H type-1" evidence="2">
    <location>
        <begin position="2"/>
        <end position="143"/>
    </location>
</feature>
<feature type="binding site" evidence="1">
    <location>
        <position position="11"/>
    </location>
    <ligand>
        <name>Mg(2+)</name>
        <dbReference type="ChEBI" id="CHEBI:18420"/>
        <label>1</label>
    </ligand>
</feature>
<feature type="binding site" evidence="1">
    <location>
        <position position="11"/>
    </location>
    <ligand>
        <name>Mg(2+)</name>
        <dbReference type="ChEBI" id="CHEBI:18420"/>
        <label>2</label>
    </ligand>
</feature>
<feature type="binding site" evidence="1">
    <location>
        <position position="49"/>
    </location>
    <ligand>
        <name>Mg(2+)</name>
        <dbReference type="ChEBI" id="CHEBI:18420"/>
        <label>1</label>
    </ligand>
</feature>
<feature type="binding site" evidence="1">
    <location>
        <position position="71"/>
    </location>
    <ligand>
        <name>Mg(2+)</name>
        <dbReference type="ChEBI" id="CHEBI:18420"/>
        <label>1</label>
    </ligand>
</feature>
<feature type="binding site" evidence="1">
    <location>
        <position position="135"/>
    </location>
    <ligand>
        <name>Mg(2+)</name>
        <dbReference type="ChEBI" id="CHEBI:18420"/>
        <label>2</label>
    </ligand>
</feature>
<name>RNH_METFK</name>
<dbReference type="EC" id="3.1.26.4" evidence="1"/>
<dbReference type="EMBL" id="CP000284">
    <property type="protein sequence ID" value="ABE49747.1"/>
    <property type="molecule type" value="Genomic_DNA"/>
</dbReference>
<dbReference type="RefSeq" id="WP_011479701.1">
    <property type="nucleotide sequence ID" value="NC_007947.1"/>
</dbReference>
<dbReference type="SMR" id="Q1H190"/>
<dbReference type="STRING" id="265072.Mfla_1479"/>
<dbReference type="KEGG" id="mfa:Mfla_1479"/>
<dbReference type="eggNOG" id="COG0328">
    <property type="taxonomic scope" value="Bacteria"/>
</dbReference>
<dbReference type="HOGENOM" id="CLU_030894_6_0_4"/>
<dbReference type="OrthoDB" id="7845843at2"/>
<dbReference type="Proteomes" id="UP000002440">
    <property type="component" value="Chromosome"/>
</dbReference>
<dbReference type="GO" id="GO:0005737">
    <property type="term" value="C:cytoplasm"/>
    <property type="evidence" value="ECO:0007669"/>
    <property type="project" value="UniProtKB-SubCell"/>
</dbReference>
<dbReference type="GO" id="GO:0000287">
    <property type="term" value="F:magnesium ion binding"/>
    <property type="evidence" value="ECO:0007669"/>
    <property type="project" value="UniProtKB-UniRule"/>
</dbReference>
<dbReference type="GO" id="GO:0003676">
    <property type="term" value="F:nucleic acid binding"/>
    <property type="evidence" value="ECO:0007669"/>
    <property type="project" value="InterPro"/>
</dbReference>
<dbReference type="GO" id="GO:0004523">
    <property type="term" value="F:RNA-DNA hybrid ribonuclease activity"/>
    <property type="evidence" value="ECO:0007669"/>
    <property type="project" value="UniProtKB-UniRule"/>
</dbReference>
<dbReference type="GO" id="GO:0043137">
    <property type="term" value="P:DNA replication, removal of RNA primer"/>
    <property type="evidence" value="ECO:0007669"/>
    <property type="project" value="TreeGrafter"/>
</dbReference>
<dbReference type="CDD" id="cd09278">
    <property type="entry name" value="RNase_HI_prokaryote_like"/>
    <property type="match status" value="1"/>
</dbReference>
<dbReference type="FunFam" id="3.30.420.10:FF:000089">
    <property type="entry name" value="Ribonuclease H"/>
    <property type="match status" value="1"/>
</dbReference>
<dbReference type="Gene3D" id="3.30.420.10">
    <property type="entry name" value="Ribonuclease H-like superfamily/Ribonuclease H"/>
    <property type="match status" value="1"/>
</dbReference>
<dbReference type="HAMAP" id="MF_00042">
    <property type="entry name" value="RNase_H"/>
    <property type="match status" value="1"/>
</dbReference>
<dbReference type="InterPro" id="IPR050092">
    <property type="entry name" value="RNase_H"/>
</dbReference>
<dbReference type="InterPro" id="IPR012337">
    <property type="entry name" value="RNaseH-like_sf"/>
</dbReference>
<dbReference type="InterPro" id="IPR002156">
    <property type="entry name" value="RNaseH_domain"/>
</dbReference>
<dbReference type="InterPro" id="IPR036397">
    <property type="entry name" value="RNaseH_sf"/>
</dbReference>
<dbReference type="InterPro" id="IPR022892">
    <property type="entry name" value="RNaseHI"/>
</dbReference>
<dbReference type="NCBIfam" id="NF001236">
    <property type="entry name" value="PRK00203.1"/>
    <property type="match status" value="1"/>
</dbReference>
<dbReference type="PANTHER" id="PTHR10642">
    <property type="entry name" value="RIBONUCLEASE H1"/>
    <property type="match status" value="1"/>
</dbReference>
<dbReference type="PANTHER" id="PTHR10642:SF26">
    <property type="entry name" value="RIBONUCLEASE H1"/>
    <property type="match status" value="1"/>
</dbReference>
<dbReference type="Pfam" id="PF00075">
    <property type="entry name" value="RNase_H"/>
    <property type="match status" value="1"/>
</dbReference>
<dbReference type="SUPFAM" id="SSF53098">
    <property type="entry name" value="Ribonuclease H-like"/>
    <property type="match status" value="1"/>
</dbReference>
<dbReference type="PROSITE" id="PS50879">
    <property type="entry name" value="RNASE_H_1"/>
    <property type="match status" value="1"/>
</dbReference>